<protein>
    <recommendedName>
        <fullName>Tyrosine-protein kinase wzc</fullName>
        <ecNumber>2.7.10.-</ecNumber>
    </recommendedName>
</protein>
<organism>
    <name type="scientific">Escherichia coli O157:H7</name>
    <dbReference type="NCBI Taxonomy" id="83334"/>
    <lineage>
        <taxon>Bacteria</taxon>
        <taxon>Pseudomonadati</taxon>
        <taxon>Pseudomonadota</taxon>
        <taxon>Gammaproteobacteria</taxon>
        <taxon>Enterobacterales</taxon>
        <taxon>Enterobacteriaceae</taxon>
        <taxon>Escherichia</taxon>
    </lineage>
</organism>
<sequence length="720" mass="79395">MTEKVKQHAAPVTGSDEIDIGRLVGTVIEARWWVIGITAVFALCAVVYTFFATPIYSADALVQIEQSSGNSLVQDIGSALANKPPASDAEIQLIRSRLVLGKTVDDLDLDIAVSKNTFPIFGAGWDRLMGRQNETVKVTTFNRPKEMEDQVFTLNVLDNKNYTLSSDGGFSARGQAGQILKKEGVTLMVEAIHARPGSEFTVTKYSTLGMINQLQNSLTVTENGKDAGVLSLTYTGEDREQIRDILNSIARNYQEQNIERKSAEASKSLAFLAQQLPEVRSRLDVAENKLNAFRQDKDSVDLPLEAKAVLDSMVNIDAQLNELTFKEAEISKLYTKVHPAYRTLLEKRQALEDEKAKLNGRVTAMPKTQQEIVRLTRDVESGQQVYMQLLNKEQELKITEASTVGDVRIVDPAITQPGVLKPKKGLIILGAIILGLMLSIVGVLLRSLFNRGIESPQVLEEHGISVYASIPLSEWQKARDSVKTIKGIKRYKQSQLLAVGNPTDLAIEAIRSLRTSLHFAMMQAQNNVLMMTGVSPSIGKTFVCANLAAVISQTNKRVLLIDCDMRKGYTHELLGTNNVNGLSEILIGQGDITTAAKPTSIAKFDLIPRGQVPPNPSELLMSERFAELVNWASKNYDLVLIDTPPILAVTDAAIVGRHVGTTLMVARYAVNTLKEVETSLSRFEQNGIPVKGVILNSIFRRASAYQDYGYYEYEYKSDAK</sequence>
<accession>Q8X7L9</accession>
<name>WZC_ECO57</name>
<dbReference type="EC" id="2.7.10.-"/>
<dbReference type="EMBL" id="AE005174">
    <property type="protein sequence ID" value="AAG57120.1"/>
    <property type="status" value="ALT_INIT"/>
    <property type="molecule type" value="Genomic_DNA"/>
</dbReference>
<dbReference type="EMBL" id="BA000007">
    <property type="protein sequence ID" value="BAB36288.2"/>
    <property type="molecule type" value="Genomic_DNA"/>
</dbReference>
<dbReference type="PIR" id="A90987">
    <property type="entry name" value="A90987"/>
</dbReference>
<dbReference type="PIR" id="D85832">
    <property type="entry name" value="D85832"/>
</dbReference>
<dbReference type="RefSeq" id="NP_310892.2">
    <property type="nucleotide sequence ID" value="NC_002695.1"/>
</dbReference>
<dbReference type="RefSeq" id="WP_000137171.1">
    <property type="nucleotide sequence ID" value="NZ_VOAI01000013.1"/>
</dbReference>
<dbReference type="BMRB" id="Q8X7L9"/>
<dbReference type="SMR" id="Q8X7L9"/>
<dbReference type="STRING" id="155864.Z3224"/>
<dbReference type="GeneID" id="912525"/>
<dbReference type="KEGG" id="ece:Z3224"/>
<dbReference type="KEGG" id="ecs:ECs_2865"/>
<dbReference type="PATRIC" id="fig|386585.9.peg.2998"/>
<dbReference type="eggNOG" id="COG0489">
    <property type="taxonomic scope" value="Bacteria"/>
</dbReference>
<dbReference type="eggNOG" id="COG3206">
    <property type="taxonomic scope" value="Bacteria"/>
</dbReference>
<dbReference type="HOGENOM" id="CLU_009912_0_0_6"/>
<dbReference type="OMA" id="TKDHPAY"/>
<dbReference type="BRENDA" id="2.7.10.1">
    <property type="organism ID" value="2026"/>
</dbReference>
<dbReference type="UniPathway" id="UPA00631"/>
<dbReference type="Proteomes" id="UP000000558">
    <property type="component" value="Chromosome"/>
</dbReference>
<dbReference type="Proteomes" id="UP000002519">
    <property type="component" value="Chromosome"/>
</dbReference>
<dbReference type="GO" id="GO:0005886">
    <property type="term" value="C:plasma membrane"/>
    <property type="evidence" value="ECO:0007669"/>
    <property type="project" value="UniProtKB-SubCell"/>
</dbReference>
<dbReference type="GO" id="GO:0005524">
    <property type="term" value="F:ATP binding"/>
    <property type="evidence" value="ECO:0007669"/>
    <property type="project" value="UniProtKB-KW"/>
</dbReference>
<dbReference type="GO" id="GO:0004713">
    <property type="term" value="F:protein tyrosine kinase activity"/>
    <property type="evidence" value="ECO:0007669"/>
    <property type="project" value="UniProtKB-KW"/>
</dbReference>
<dbReference type="GO" id="GO:0000271">
    <property type="term" value="P:polysaccharide biosynthetic process"/>
    <property type="evidence" value="ECO:0007669"/>
    <property type="project" value="UniProtKB-KW"/>
</dbReference>
<dbReference type="CDD" id="cd05387">
    <property type="entry name" value="BY-kinase"/>
    <property type="match status" value="1"/>
</dbReference>
<dbReference type="FunFam" id="3.40.50.300:FF:000527">
    <property type="entry name" value="Tyrosine-protein kinase etk"/>
    <property type="match status" value="1"/>
</dbReference>
<dbReference type="Gene3D" id="3.40.50.300">
    <property type="entry name" value="P-loop containing nucleotide triphosphate hydrolases"/>
    <property type="match status" value="1"/>
</dbReference>
<dbReference type="InterPro" id="IPR025669">
    <property type="entry name" value="AAA_dom"/>
</dbReference>
<dbReference type="InterPro" id="IPR050445">
    <property type="entry name" value="Bact_polysacc_biosynth/exp"/>
</dbReference>
<dbReference type="InterPro" id="IPR032807">
    <property type="entry name" value="GNVR"/>
</dbReference>
<dbReference type="InterPro" id="IPR003856">
    <property type="entry name" value="LPS_length_determ_N_term"/>
</dbReference>
<dbReference type="InterPro" id="IPR027417">
    <property type="entry name" value="P-loop_NTPase"/>
</dbReference>
<dbReference type="InterPro" id="IPR005702">
    <property type="entry name" value="Wzc-like_C"/>
</dbReference>
<dbReference type="NCBIfam" id="TIGR01007">
    <property type="entry name" value="eps_fam"/>
    <property type="match status" value="1"/>
</dbReference>
<dbReference type="NCBIfam" id="NF008568">
    <property type="entry name" value="PRK11519.1"/>
    <property type="match status" value="1"/>
</dbReference>
<dbReference type="PANTHER" id="PTHR32309">
    <property type="entry name" value="TYROSINE-PROTEIN KINASE"/>
    <property type="match status" value="1"/>
</dbReference>
<dbReference type="PANTHER" id="PTHR32309:SF32">
    <property type="entry name" value="TYROSINE-PROTEIN KINASE ETK-RELATED"/>
    <property type="match status" value="1"/>
</dbReference>
<dbReference type="Pfam" id="PF13614">
    <property type="entry name" value="AAA_31"/>
    <property type="match status" value="1"/>
</dbReference>
<dbReference type="Pfam" id="PF13807">
    <property type="entry name" value="GNVR"/>
    <property type="match status" value="1"/>
</dbReference>
<dbReference type="Pfam" id="PF23607">
    <property type="entry name" value="WZC_N"/>
    <property type="match status" value="1"/>
</dbReference>
<dbReference type="Pfam" id="PF02706">
    <property type="entry name" value="Wzz"/>
    <property type="match status" value="1"/>
</dbReference>
<dbReference type="SUPFAM" id="SSF52540">
    <property type="entry name" value="P-loop containing nucleoside triphosphate hydrolases"/>
    <property type="match status" value="1"/>
</dbReference>
<comment type="function">
    <text evidence="1">Required for the extracellular polysaccharide colanic acid synthesis. The autophosphorylated form is inactive. Probably involved in the export of colanic acid from the cell to medium. Phosphorylates udg (By similarity).</text>
</comment>
<comment type="catalytic activity">
    <reaction>
        <text>L-tyrosyl-[protein] + ATP = O-phospho-L-tyrosyl-[protein] + ADP + H(+)</text>
        <dbReference type="Rhea" id="RHEA:10596"/>
        <dbReference type="Rhea" id="RHEA-COMP:10136"/>
        <dbReference type="Rhea" id="RHEA-COMP:20101"/>
        <dbReference type="ChEBI" id="CHEBI:15378"/>
        <dbReference type="ChEBI" id="CHEBI:30616"/>
        <dbReference type="ChEBI" id="CHEBI:46858"/>
        <dbReference type="ChEBI" id="CHEBI:61978"/>
        <dbReference type="ChEBI" id="CHEBI:456216"/>
    </reaction>
</comment>
<comment type="activity regulation">
    <text evidence="1">Dephosphorylated and activated by wzb.</text>
</comment>
<comment type="pathway">
    <text>Glycan metabolism; exopolysaccharide biosynthesis.</text>
</comment>
<comment type="subcellular location">
    <subcellularLocation>
        <location evidence="1">Cell inner membrane</location>
        <topology evidence="1">Multi-pass membrane protein</topology>
    </subcellularLocation>
</comment>
<comment type="PTM">
    <text evidence="1">Autophosphorylated. Seems to be phosphorylated through a cooperative two-step mechanism. First, Tyr-569 is phosphorylated in an intramolecular reaction that generates a significant increase of protein kinase activity. Then Tyr-708, Tyr-710, Tyr-711, Tyr-713 and Tyr-715 are phosphorylated in an intermolecular Tyr-569-dependent reaction (By similarity).</text>
</comment>
<comment type="similarity">
    <text evidence="3">Belongs to the etk/wzc family.</text>
</comment>
<comment type="sequence caution" evidence="3">
    <conflict type="erroneous initiation">
        <sequence resource="EMBL-CDS" id="AAG57120"/>
    </conflict>
    <text>Extended N-terminus.</text>
</comment>
<keyword id="KW-0067">ATP-binding</keyword>
<keyword id="KW-0997">Cell inner membrane</keyword>
<keyword id="KW-1003">Cell membrane</keyword>
<keyword id="KW-0270">Exopolysaccharide synthesis</keyword>
<keyword id="KW-0418">Kinase</keyword>
<keyword id="KW-0472">Membrane</keyword>
<keyword id="KW-0547">Nucleotide-binding</keyword>
<keyword id="KW-0597">Phosphoprotein</keyword>
<keyword id="KW-1185">Reference proteome</keyword>
<keyword id="KW-0808">Transferase</keyword>
<keyword id="KW-0812">Transmembrane</keyword>
<keyword id="KW-1133">Transmembrane helix</keyword>
<keyword id="KW-0829">Tyrosine-protein kinase</keyword>
<reference key="1">
    <citation type="journal article" date="2001" name="Nature">
        <title>Genome sequence of enterohaemorrhagic Escherichia coli O157:H7.</title>
        <authorList>
            <person name="Perna N.T."/>
            <person name="Plunkett G. III"/>
            <person name="Burland V."/>
            <person name="Mau B."/>
            <person name="Glasner J.D."/>
            <person name="Rose D.J."/>
            <person name="Mayhew G.F."/>
            <person name="Evans P.S."/>
            <person name="Gregor J."/>
            <person name="Kirkpatrick H.A."/>
            <person name="Posfai G."/>
            <person name="Hackett J."/>
            <person name="Klink S."/>
            <person name="Boutin A."/>
            <person name="Shao Y."/>
            <person name="Miller L."/>
            <person name="Grotbeck E.J."/>
            <person name="Davis N.W."/>
            <person name="Lim A."/>
            <person name="Dimalanta E.T."/>
            <person name="Potamousis K."/>
            <person name="Apodaca J."/>
            <person name="Anantharaman T.S."/>
            <person name="Lin J."/>
            <person name="Yen G."/>
            <person name="Schwartz D.C."/>
            <person name="Welch R.A."/>
            <person name="Blattner F.R."/>
        </authorList>
    </citation>
    <scope>NUCLEOTIDE SEQUENCE [LARGE SCALE GENOMIC DNA]</scope>
    <source>
        <strain>O157:H7 / EDL933 / ATCC 700927 / EHEC</strain>
    </source>
</reference>
<reference key="2">
    <citation type="journal article" date="2001" name="DNA Res.">
        <title>Complete genome sequence of enterohemorrhagic Escherichia coli O157:H7 and genomic comparison with a laboratory strain K-12.</title>
        <authorList>
            <person name="Hayashi T."/>
            <person name="Makino K."/>
            <person name="Ohnishi M."/>
            <person name="Kurokawa K."/>
            <person name="Ishii K."/>
            <person name="Yokoyama K."/>
            <person name="Han C.-G."/>
            <person name="Ohtsubo E."/>
            <person name="Nakayama K."/>
            <person name="Murata T."/>
            <person name="Tanaka M."/>
            <person name="Tobe T."/>
            <person name="Iida T."/>
            <person name="Takami H."/>
            <person name="Honda T."/>
            <person name="Sasakawa C."/>
            <person name="Ogasawara N."/>
            <person name="Yasunaga T."/>
            <person name="Kuhara S."/>
            <person name="Shiba T."/>
            <person name="Hattori M."/>
            <person name="Shinagawa H."/>
        </authorList>
    </citation>
    <scope>NUCLEOTIDE SEQUENCE [LARGE SCALE GENOMIC DNA]</scope>
    <source>
        <strain>O157:H7 / Sakai / RIMD 0509952 / EHEC</strain>
    </source>
</reference>
<gene>
    <name type="primary">wzc</name>
    <name type="ordered locus">Z3224</name>
    <name type="ordered locus">ECs2865</name>
</gene>
<feature type="chain" id="PRO_0000212354" description="Tyrosine-protein kinase wzc">
    <location>
        <begin position="1"/>
        <end position="720"/>
    </location>
</feature>
<feature type="topological domain" description="Cytoplasmic" evidence="2">
    <location>
        <begin position="1"/>
        <end position="31"/>
    </location>
</feature>
<feature type="transmembrane region" description="Helical" evidence="2">
    <location>
        <begin position="32"/>
        <end position="52"/>
    </location>
</feature>
<feature type="topological domain" description="Periplasmic" evidence="2">
    <location>
        <begin position="53"/>
        <end position="424"/>
    </location>
</feature>
<feature type="transmembrane region" description="Helical" evidence="2">
    <location>
        <begin position="425"/>
        <end position="445"/>
    </location>
</feature>
<feature type="topological domain" description="Cytoplasmic" evidence="2">
    <location>
        <begin position="446"/>
        <end position="720"/>
    </location>
</feature>
<feature type="modified residue" description="Phosphotyrosine; by autocatalysis" evidence="1">
    <location>
        <position position="569"/>
    </location>
</feature>
<feature type="modified residue" description="Phosphotyrosine" evidence="1">
    <location>
        <position position="708"/>
    </location>
</feature>
<feature type="modified residue" description="Phosphotyrosine" evidence="1">
    <location>
        <position position="710"/>
    </location>
</feature>
<feature type="modified residue" description="Phosphotyrosine" evidence="1">
    <location>
        <position position="711"/>
    </location>
</feature>
<feature type="modified residue" description="Phosphotyrosine" evidence="1">
    <location>
        <position position="713"/>
    </location>
</feature>
<feature type="modified residue" description="Phosphotyrosine" evidence="1">
    <location>
        <position position="715"/>
    </location>
</feature>
<proteinExistence type="inferred from homology"/>
<evidence type="ECO:0000250" key="1"/>
<evidence type="ECO:0000255" key="2"/>
<evidence type="ECO:0000305" key="3"/>